<feature type="chain" id="PRO_1000142289" description="Large ribosomal subunit protein uL22">
    <location>
        <begin position="1"/>
        <end position="118"/>
    </location>
</feature>
<name>RL22_NOSP7</name>
<sequence length="118" mass="13275">MATNTTEVKAIARFIRISAYKVRRVLDQIRGRSYREALIILEFMPYRATEPILKVLRSAAANAEHNAGLDRTQLVITQAYADQGPPLKRFQPRAQGRAYQIRKPTCHITVAVGAAPEK</sequence>
<keyword id="KW-1185">Reference proteome</keyword>
<keyword id="KW-0687">Ribonucleoprotein</keyword>
<keyword id="KW-0689">Ribosomal protein</keyword>
<keyword id="KW-0694">RNA-binding</keyword>
<keyword id="KW-0699">rRNA-binding</keyword>
<evidence type="ECO:0000255" key="1">
    <source>
        <dbReference type="HAMAP-Rule" id="MF_01331"/>
    </source>
</evidence>
<evidence type="ECO:0000305" key="2"/>
<organism>
    <name type="scientific">Nostoc punctiforme (strain ATCC 29133 / PCC 73102)</name>
    <dbReference type="NCBI Taxonomy" id="63737"/>
    <lineage>
        <taxon>Bacteria</taxon>
        <taxon>Bacillati</taxon>
        <taxon>Cyanobacteriota</taxon>
        <taxon>Cyanophyceae</taxon>
        <taxon>Nostocales</taxon>
        <taxon>Nostocaceae</taxon>
        <taxon>Nostoc</taxon>
    </lineage>
</organism>
<proteinExistence type="inferred from homology"/>
<reference key="1">
    <citation type="journal article" date="2013" name="Plant Physiol.">
        <title>A Nostoc punctiforme Sugar Transporter Necessary to Establish a Cyanobacterium-Plant Symbiosis.</title>
        <authorList>
            <person name="Ekman M."/>
            <person name="Picossi S."/>
            <person name="Campbell E.L."/>
            <person name="Meeks J.C."/>
            <person name="Flores E."/>
        </authorList>
    </citation>
    <scope>NUCLEOTIDE SEQUENCE [LARGE SCALE GENOMIC DNA]</scope>
    <source>
        <strain>ATCC 29133 / PCC 73102</strain>
    </source>
</reference>
<comment type="function">
    <text evidence="1">This protein binds specifically to 23S rRNA; its binding is stimulated by other ribosomal proteins, e.g. L4, L17, and L20. It is important during the early stages of 50S assembly. It makes multiple contacts with different domains of the 23S rRNA in the assembled 50S subunit and ribosome (By similarity).</text>
</comment>
<comment type="function">
    <text evidence="1">The globular domain of the protein is located near the polypeptide exit tunnel on the outside of the subunit, while an extended beta-hairpin is found that lines the wall of the exit tunnel in the center of the 70S ribosome.</text>
</comment>
<comment type="subunit">
    <text evidence="1">Part of the 50S ribosomal subunit.</text>
</comment>
<comment type="similarity">
    <text evidence="1">Belongs to the universal ribosomal protein uL22 family.</text>
</comment>
<accession>B2ITQ0</accession>
<protein>
    <recommendedName>
        <fullName evidence="1">Large ribosomal subunit protein uL22</fullName>
    </recommendedName>
    <alternativeName>
        <fullName evidence="2">50S ribosomal protein L22</fullName>
    </alternativeName>
</protein>
<dbReference type="EMBL" id="CP001037">
    <property type="protein sequence ID" value="ACC82758.1"/>
    <property type="molecule type" value="Genomic_DNA"/>
</dbReference>
<dbReference type="RefSeq" id="WP_012410720.1">
    <property type="nucleotide sequence ID" value="NC_010628.1"/>
</dbReference>
<dbReference type="SMR" id="B2ITQ0"/>
<dbReference type="STRING" id="63737.Npun_R4385"/>
<dbReference type="EnsemblBacteria" id="ACC82758">
    <property type="protein sequence ID" value="ACC82758"/>
    <property type="gene ID" value="Npun_R4385"/>
</dbReference>
<dbReference type="KEGG" id="npu:Npun_R4385"/>
<dbReference type="eggNOG" id="COG0091">
    <property type="taxonomic scope" value="Bacteria"/>
</dbReference>
<dbReference type="HOGENOM" id="CLU_083987_3_2_3"/>
<dbReference type="OrthoDB" id="9805969at2"/>
<dbReference type="PhylomeDB" id="B2ITQ0"/>
<dbReference type="Proteomes" id="UP000001191">
    <property type="component" value="Chromosome"/>
</dbReference>
<dbReference type="GO" id="GO:0022625">
    <property type="term" value="C:cytosolic large ribosomal subunit"/>
    <property type="evidence" value="ECO:0007669"/>
    <property type="project" value="TreeGrafter"/>
</dbReference>
<dbReference type="GO" id="GO:0019843">
    <property type="term" value="F:rRNA binding"/>
    <property type="evidence" value="ECO:0007669"/>
    <property type="project" value="UniProtKB-UniRule"/>
</dbReference>
<dbReference type="GO" id="GO:0003735">
    <property type="term" value="F:structural constituent of ribosome"/>
    <property type="evidence" value="ECO:0007669"/>
    <property type="project" value="InterPro"/>
</dbReference>
<dbReference type="GO" id="GO:0006412">
    <property type="term" value="P:translation"/>
    <property type="evidence" value="ECO:0007669"/>
    <property type="project" value="UniProtKB-UniRule"/>
</dbReference>
<dbReference type="CDD" id="cd00336">
    <property type="entry name" value="Ribosomal_L22"/>
    <property type="match status" value="1"/>
</dbReference>
<dbReference type="FunFam" id="3.90.470.10:FF:000004">
    <property type="entry name" value="50S ribosomal protein L22, chloroplastic"/>
    <property type="match status" value="1"/>
</dbReference>
<dbReference type="Gene3D" id="3.90.470.10">
    <property type="entry name" value="Ribosomal protein L22/L17"/>
    <property type="match status" value="1"/>
</dbReference>
<dbReference type="HAMAP" id="MF_01331_B">
    <property type="entry name" value="Ribosomal_uL22_B"/>
    <property type="match status" value="1"/>
</dbReference>
<dbReference type="InterPro" id="IPR001063">
    <property type="entry name" value="Ribosomal_uL22"/>
</dbReference>
<dbReference type="InterPro" id="IPR005727">
    <property type="entry name" value="Ribosomal_uL22_bac/chlpt-type"/>
</dbReference>
<dbReference type="InterPro" id="IPR047867">
    <property type="entry name" value="Ribosomal_uL22_bac/org-type"/>
</dbReference>
<dbReference type="InterPro" id="IPR018260">
    <property type="entry name" value="Ribosomal_uL22_CS"/>
</dbReference>
<dbReference type="InterPro" id="IPR036394">
    <property type="entry name" value="Ribosomal_uL22_sf"/>
</dbReference>
<dbReference type="NCBIfam" id="TIGR01044">
    <property type="entry name" value="rplV_bact"/>
    <property type="match status" value="1"/>
</dbReference>
<dbReference type="PANTHER" id="PTHR13501">
    <property type="entry name" value="CHLOROPLAST 50S RIBOSOMAL PROTEIN L22-RELATED"/>
    <property type="match status" value="1"/>
</dbReference>
<dbReference type="PANTHER" id="PTHR13501:SF8">
    <property type="entry name" value="LARGE RIBOSOMAL SUBUNIT PROTEIN UL22M"/>
    <property type="match status" value="1"/>
</dbReference>
<dbReference type="Pfam" id="PF00237">
    <property type="entry name" value="Ribosomal_L22"/>
    <property type="match status" value="1"/>
</dbReference>
<dbReference type="SUPFAM" id="SSF54843">
    <property type="entry name" value="Ribosomal protein L22"/>
    <property type="match status" value="1"/>
</dbReference>
<dbReference type="PROSITE" id="PS00464">
    <property type="entry name" value="RIBOSOMAL_L22"/>
    <property type="match status" value="1"/>
</dbReference>
<gene>
    <name evidence="1" type="primary">rplV</name>
    <name evidence="1" type="synonym">rpl22</name>
    <name type="ordered locus">Npun_R4385</name>
</gene>